<reference key="1">
    <citation type="journal article" date="2005" name="Nature">
        <title>The map-based sequence of the rice genome.</title>
        <authorList>
            <consortium name="International rice genome sequencing project (IRGSP)"/>
        </authorList>
    </citation>
    <scope>NUCLEOTIDE SEQUENCE [LARGE SCALE GENOMIC DNA]</scope>
    <source>
        <strain>cv. Nipponbare</strain>
    </source>
</reference>
<reference key="2">
    <citation type="journal article" date="2008" name="Nucleic Acids Res.">
        <title>The rice annotation project database (RAP-DB): 2008 update.</title>
        <authorList>
            <consortium name="The rice annotation project (RAP)"/>
        </authorList>
    </citation>
    <scope>GENOME REANNOTATION</scope>
    <source>
        <strain>cv. Nipponbare</strain>
    </source>
</reference>
<reference key="3">
    <citation type="journal article" date="2013" name="Rice">
        <title>Improvement of the Oryza sativa Nipponbare reference genome using next generation sequence and optical map data.</title>
        <authorList>
            <person name="Kawahara Y."/>
            <person name="de la Bastide M."/>
            <person name="Hamilton J.P."/>
            <person name="Kanamori H."/>
            <person name="McCombie W.R."/>
            <person name="Ouyang S."/>
            <person name="Schwartz D.C."/>
            <person name="Tanaka T."/>
            <person name="Wu J."/>
            <person name="Zhou S."/>
            <person name="Childs K.L."/>
            <person name="Davidson R.M."/>
            <person name="Lin H."/>
            <person name="Quesada-Ocampo L."/>
            <person name="Vaillancourt B."/>
            <person name="Sakai H."/>
            <person name="Lee S.S."/>
            <person name="Kim J."/>
            <person name="Numa H."/>
            <person name="Itoh T."/>
            <person name="Buell C.R."/>
            <person name="Matsumoto T."/>
        </authorList>
    </citation>
    <scope>GENOME REANNOTATION</scope>
    <source>
        <strain>cv. Nipponbare</strain>
    </source>
</reference>
<reference key="4">
    <citation type="journal article" date="2003" name="Science">
        <title>Collection, mapping, and annotation of over 28,000 cDNA clones from japonica rice.</title>
        <authorList>
            <consortium name="The rice full-length cDNA consortium"/>
        </authorList>
    </citation>
    <scope>NUCLEOTIDE SEQUENCE [LARGE SCALE MRNA]</scope>
    <source>
        <strain>cv. Nipponbare</strain>
    </source>
</reference>
<reference key="5">
    <citation type="journal article" date="2004" name="Plant Cell Physiol.">
        <title>Phytochrome-mediated transcriptional up-regulation of ALLENE OXIDE SYNTHASE in rice seedlings.</title>
        <authorList>
            <person name="Haga K."/>
            <person name="Iino M."/>
        </authorList>
    </citation>
    <scope>TISSUE SPECIFICITY</scope>
    <scope>INDUCTION</scope>
    <scope>NOMENCLATURE</scope>
</reference>
<protein>
    <recommendedName>
        <fullName>Allene oxide synthase 3</fullName>
        <ecNumber>4.2.1.92</ecNumber>
    </recommendedName>
    <alternativeName>
        <fullName>Cytochrome P450 74A3</fullName>
    </alternativeName>
    <alternativeName>
        <fullName>Hydroperoxide dehydrase 3</fullName>
    </alternativeName>
</protein>
<sequence length="500" mass="54439">MAPPPVNSGDAAAAATGEKSKLSPSGLPIREIPGGYGVPFFSPLRDRLDYFYFQGAEEYFRSRVARHGGATVLRVNMPPGPFISGNPRVVALLDARSFRVLLDDSMVDKADTLDGTYMPSRALFGGHRPLAFLDAADPRHAKIKRVVMSLAAARMHHVAPAFRAAFAAMFDAVEAGLGAAVEFNKLNMRYMLDFTCAALFGGEPPSKVVGDGAVTKAMAWLAFQLHPIASKVVKPWPLEELLLHTFSLPPFLVRRGYADLKAYFADAAAAVLDDAEKSHTGIPRDELLDNLVFVAIFNAFGGFKIFLPHIVKWLARAGPELHAKLATEVRATVPTGEDDGITLAAVERMPLVKSVVWEALRMNPPVEFQYGHARRDMVVESHDAAYEVRKGEMLFGYQPLATRDEKVFDRAGEFVADRFVAGGAAGDRPLLEHVVWSNGPETRAPSEGNKQCPGKDMVVAVGRLMVAELFRRYDTFAADVVEAPVEPVVTFTSLTRASSG</sequence>
<accession>Q6Z6L1</accession>
<accession>Q0E2R7</accession>
<proteinExistence type="evidence at transcript level"/>
<gene>
    <name type="primary">CYP74A3</name>
    <name type="synonym">AOS3</name>
    <name type="ordered locus">Os02g0218700</name>
    <name type="ordered locus">LOC_Os02g12680</name>
    <name type="ORF">P0027A02.12</name>
</gene>
<feature type="chain" id="PRO_0000052126" description="Allene oxide synthase 3">
    <location>
        <begin position="1"/>
        <end position="500"/>
    </location>
</feature>
<feature type="region of interest" description="Disordered" evidence="2">
    <location>
        <begin position="1"/>
        <end position="26"/>
    </location>
</feature>
<feature type="binding site" evidence="1">
    <location>
        <begin position="297"/>
        <end position="298"/>
    </location>
    <ligand>
        <name>substrate</name>
    </ligand>
</feature>
<feature type="binding site" evidence="1">
    <location>
        <position position="304"/>
    </location>
    <ligand>
        <name>substrate</name>
    </ligand>
</feature>
<feature type="binding site" evidence="1">
    <location>
        <begin position="365"/>
        <end position="368"/>
    </location>
    <ligand>
        <name>substrate</name>
    </ligand>
</feature>
<feature type="binding site" description="axial binding residue" evidence="1">
    <location>
        <position position="452"/>
    </location>
    <ligand>
        <name>heme</name>
        <dbReference type="ChEBI" id="CHEBI:30413"/>
    </ligand>
    <ligandPart>
        <name>Fe</name>
        <dbReference type="ChEBI" id="CHEBI:18248"/>
    </ligandPart>
</feature>
<comment type="function">
    <text evidence="1">Involved in the biosynthesis of jasmonic acid, a growth regulator that is implicated also as a signaling molecule in plant defense. Converts 13-hydroperoxylinolenic acid to 12,13-epoxylinolenic acid (By similarity).</text>
</comment>
<comment type="catalytic activity">
    <reaction>
        <text>(13S)-hydroperoxy-(9Z,11E,15Z)-octadecatrienoate = (9Z,13S,15Z)-12,13-epoxyoctadeca-9,11,15-trienoate + H2O</text>
        <dbReference type="Rhea" id="RHEA:25074"/>
        <dbReference type="ChEBI" id="CHEBI:15377"/>
        <dbReference type="ChEBI" id="CHEBI:36438"/>
        <dbReference type="ChEBI" id="CHEBI:58757"/>
        <dbReference type="EC" id="4.2.1.92"/>
    </reaction>
</comment>
<comment type="cofactor">
    <cofactor evidence="1">
        <name>heme</name>
        <dbReference type="ChEBI" id="CHEBI:30413"/>
    </cofactor>
</comment>
<comment type="pathway">
    <text>Lipid metabolism; oxylipin biosynthesis.</text>
</comment>
<comment type="tissue specificity">
    <text evidence="3">Not expressed in dark-grown seedlings.</text>
</comment>
<comment type="induction">
    <text evidence="3">Not induced by red (R) light, or abrasion in dark-grown seedlings.</text>
</comment>
<comment type="similarity">
    <text evidence="4">Belongs to the cytochrome P450 family.</text>
</comment>
<organism>
    <name type="scientific">Oryza sativa subsp. japonica</name>
    <name type="common">Rice</name>
    <dbReference type="NCBI Taxonomy" id="39947"/>
    <lineage>
        <taxon>Eukaryota</taxon>
        <taxon>Viridiplantae</taxon>
        <taxon>Streptophyta</taxon>
        <taxon>Embryophyta</taxon>
        <taxon>Tracheophyta</taxon>
        <taxon>Spermatophyta</taxon>
        <taxon>Magnoliopsida</taxon>
        <taxon>Liliopsida</taxon>
        <taxon>Poales</taxon>
        <taxon>Poaceae</taxon>
        <taxon>BOP clade</taxon>
        <taxon>Oryzoideae</taxon>
        <taxon>Oryzeae</taxon>
        <taxon>Oryzinae</taxon>
        <taxon>Oryza</taxon>
        <taxon>Oryza sativa</taxon>
    </lineage>
</organism>
<evidence type="ECO:0000250" key="1"/>
<evidence type="ECO:0000256" key="2">
    <source>
        <dbReference type="SAM" id="MobiDB-lite"/>
    </source>
</evidence>
<evidence type="ECO:0000269" key="3">
    <source>
    </source>
</evidence>
<evidence type="ECO:0000305" key="4"/>
<name>C74A3_ORYSJ</name>
<dbReference type="EC" id="4.2.1.92"/>
<dbReference type="EMBL" id="AP004996">
    <property type="protein sequence ID" value="BAD17182.1"/>
    <property type="molecule type" value="Genomic_DNA"/>
</dbReference>
<dbReference type="EMBL" id="AP008208">
    <property type="protein sequence ID" value="BAF08221.1"/>
    <property type="molecule type" value="Genomic_DNA"/>
</dbReference>
<dbReference type="EMBL" id="AP014958">
    <property type="protein sequence ID" value="BAS77678.1"/>
    <property type="molecule type" value="Genomic_DNA"/>
</dbReference>
<dbReference type="EMBL" id="AK107161">
    <property type="protein sequence ID" value="BAG97978.1"/>
    <property type="molecule type" value="mRNA"/>
</dbReference>
<dbReference type="RefSeq" id="XP_015624763.1">
    <property type="nucleotide sequence ID" value="XM_015769277.1"/>
</dbReference>
<dbReference type="SMR" id="Q6Z6L1"/>
<dbReference type="FunCoup" id="Q6Z6L1">
    <property type="interactions" value="17"/>
</dbReference>
<dbReference type="STRING" id="39947.Q6Z6L1"/>
<dbReference type="PaxDb" id="39947-Q6Z6L1"/>
<dbReference type="EnsemblPlants" id="Os02t0218700-01">
    <property type="protein sequence ID" value="Os02t0218700-01"/>
    <property type="gene ID" value="Os02g0218700"/>
</dbReference>
<dbReference type="Gramene" id="Os02t0218700-01">
    <property type="protein sequence ID" value="Os02t0218700-01"/>
    <property type="gene ID" value="Os02g0218700"/>
</dbReference>
<dbReference type="KEGG" id="dosa:Os02g0218700"/>
<dbReference type="eggNOG" id="ENOG502QQNS">
    <property type="taxonomic scope" value="Eukaryota"/>
</dbReference>
<dbReference type="HOGENOM" id="CLU_045757_0_0_1"/>
<dbReference type="InParanoid" id="Q6Z6L1"/>
<dbReference type="OMA" id="MYGRARE"/>
<dbReference type="OrthoDB" id="2789670at2759"/>
<dbReference type="PlantReactome" id="R-OSA-1119332">
    <property type="pathway name" value="Jasmonic acid biosynthesis"/>
</dbReference>
<dbReference type="UniPathway" id="UPA00382"/>
<dbReference type="Proteomes" id="UP000000763">
    <property type="component" value="Chromosome 2"/>
</dbReference>
<dbReference type="Proteomes" id="UP000059680">
    <property type="component" value="Chromosome 2"/>
</dbReference>
<dbReference type="GO" id="GO:0009978">
    <property type="term" value="F:allene oxide synthase activity"/>
    <property type="evidence" value="ECO:0007669"/>
    <property type="project" value="UniProtKB-EC"/>
</dbReference>
<dbReference type="GO" id="GO:0020037">
    <property type="term" value="F:heme binding"/>
    <property type="evidence" value="ECO:0007669"/>
    <property type="project" value="InterPro"/>
</dbReference>
<dbReference type="GO" id="GO:0005506">
    <property type="term" value="F:iron ion binding"/>
    <property type="evidence" value="ECO:0007669"/>
    <property type="project" value="InterPro"/>
</dbReference>
<dbReference type="GO" id="GO:0004497">
    <property type="term" value="F:monooxygenase activity"/>
    <property type="evidence" value="ECO:0000318"/>
    <property type="project" value="GO_Central"/>
</dbReference>
<dbReference type="GO" id="GO:0016705">
    <property type="term" value="F:oxidoreductase activity, acting on paired donors, with incorporation or reduction of molecular oxygen"/>
    <property type="evidence" value="ECO:0007669"/>
    <property type="project" value="InterPro"/>
</dbReference>
<dbReference type="GO" id="GO:0006633">
    <property type="term" value="P:fatty acid biosynthetic process"/>
    <property type="evidence" value="ECO:0007669"/>
    <property type="project" value="UniProtKB-KW"/>
</dbReference>
<dbReference type="GO" id="GO:0031408">
    <property type="term" value="P:oxylipin biosynthetic process"/>
    <property type="evidence" value="ECO:0007669"/>
    <property type="project" value="UniProtKB-UniPathway"/>
</dbReference>
<dbReference type="CDD" id="cd11071">
    <property type="entry name" value="CYP74"/>
    <property type="match status" value="1"/>
</dbReference>
<dbReference type="FunFam" id="1.10.630.10:FF:000024">
    <property type="entry name" value="Allene oxide synthase, chloroplastic"/>
    <property type="match status" value="1"/>
</dbReference>
<dbReference type="Gene3D" id="1.10.630.10">
    <property type="entry name" value="Cytochrome P450"/>
    <property type="match status" value="1"/>
</dbReference>
<dbReference type="InterPro" id="IPR001128">
    <property type="entry name" value="Cyt_P450"/>
</dbReference>
<dbReference type="InterPro" id="IPR002403">
    <property type="entry name" value="Cyt_P450_E_grp-IV"/>
</dbReference>
<dbReference type="InterPro" id="IPR036396">
    <property type="entry name" value="Cyt_P450_sf"/>
</dbReference>
<dbReference type="PANTHER" id="PTHR24286:SF365">
    <property type="entry name" value="ALLENE OXIDE SYNTHASE 3"/>
    <property type="match status" value="1"/>
</dbReference>
<dbReference type="PANTHER" id="PTHR24286">
    <property type="entry name" value="CYTOCHROME P450 26"/>
    <property type="match status" value="1"/>
</dbReference>
<dbReference type="Pfam" id="PF00067">
    <property type="entry name" value="p450"/>
    <property type="match status" value="1"/>
</dbReference>
<dbReference type="PRINTS" id="PR00465">
    <property type="entry name" value="EP450IV"/>
</dbReference>
<dbReference type="SUPFAM" id="SSF48264">
    <property type="entry name" value="Cytochrome P450"/>
    <property type="match status" value="1"/>
</dbReference>
<keyword id="KW-0275">Fatty acid biosynthesis</keyword>
<keyword id="KW-0276">Fatty acid metabolism</keyword>
<keyword id="KW-0349">Heme</keyword>
<keyword id="KW-0408">Iron</keyword>
<keyword id="KW-0444">Lipid biosynthesis</keyword>
<keyword id="KW-0443">Lipid metabolism</keyword>
<keyword id="KW-0456">Lyase</keyword>
<keyword id="KW-0479">Metal-binding</keyword>
<keyword id="KW-0925">Oxylipin biosynthesis</keyword>
<keyword id="KW-1185">Reference proteome</keyword>